<evidence type="ECO:0000250" key="1"/>
<evidence type="ECO:0000250" key="2">
    <source>
        <dbReference type="UniProtKB" id="P04298"/>
    </source>
</evidence>
<evidence type="ECO:0000255" key="3">
    <source>
        <dbReference type="PROSITE-ProRule" id="PRU00895"/>
    </source>
</evidence>
<evidence type="ECO:0000305" key="4"/>
<accession>O57209</accession>
<gene>
    <name type="primary">OPG113</name>
    <name type="ordered locus">MVA098R</name>
    <name type="ordered locus">ACAM3000_MVA_098</name>
</gene>
<proteinExistence type="inferred from homology"/>
<feature type="chain" id="PRO_0000210121" description="mRNA-capping enzyme catalytic subunit">
    <location>
        <begin position="1"/>
        <end position="844"/>
    </location>
</feature>
<feature type="domain" description="mRNA cap 0 methyltransferase" evidence="3">
    <location>
        <begin position="516"/>
        <end position="844"/>
    </location>
</feature>
<feature type="region of interest" description="Triphosphatase-guanylyltransferase" evidence="2">
    <location>
        <begin position="1"/>
        <end position="539"/>
    </location>
</feature>
<feature type="active site" description="N6-GMP-lysine intermediate" evidence="1">
    <location>
        <position position="260"/>
    </location>
</feature>
<feature type="binding site" evidence="2">
    <location>
        <position position="37"/>
    </location>
    <ligand>
        <name>Mg(2+)</name>
        <dbReference type="ChEBI" id="CHEBI:18420"/>
        <note>catalytic; for RNA triphosphatase activity</note>
    </ligand>
</feature>
<feature type="binding site" evidence="2">
    <location>
        <position position="39"/>
    </location>
    <ligand>
        <name>Mg(2+)</name>
        <dbReference type="ChEBI" id="CHEBI:18420"/>
        <note>catalytic; for RNA triphosphatase activity</note>
    </ligand>
</feature>
<feature type="binding site" evidence="2">
    <location>
        <position position="192"/>
    </location>
    <ligand>
        <name>Mg(2+)</name>
        <dbReference type="ChEBI" id="CHEBI:18420"/>
        <note>catalytic; for RNA triphosphatase activity</note>
    </ligand>
</feature>
<feature type="binding site" evidence="2">
    <location>
        <position position="194"/>
    </location>
    <ligand>
        <name>Mg(2+)</name>
        <dbReference type="ChEBI" id="CHEBI:18420"/>
        <note>catalytic; for RNA triphosphatase activity</note>
    </ligand>
</feature>
<feature type="binding site" evidence="3">
    <location>
        <begin position="549"/>
        <end position="550"/>
    </location>
    <ligand>
        <name>S-adenosyl-L-methionine</name>
        <dbReference type="ChEBI" id="CHEBI:59789"/>
    </ligand>
</feature>
<feature type="binding site" evidence="3">
    <location>
        <begin position="569"/>
        <end position="570"/>
    </location>
    <ligand>
        <name>mRNA</name>
        <dbReference type="ChEBI" id="CHEBI:33699"/>
    </ligand>
    <ligandPart>
        <name>mRNA cap</name>
    </ligandPart>
</feature>
<feature type="binding site" evidence="3">
    <location>
        <position position="573"/>
    </location>
    <ligand>
        <name>S-adenosyl-L-methionine</name>
        <dbReference type="ChEBI" id="CHEBI:59789"/>
    </ligand>
</feature>
<feature type="binding site" evidence="3">
    <location>
        <position position="598"/>
    </location>
    <ligand>
        <name>S-adenosyl-L-methionine</name>
        <dbReference type="ChEBI" id="CHEBI:59789"/>
    </ligand>
</feature>
<feature type="binding site" evidence="3">
    <location>
        <position position="620"/>
    </location>
    <ligand>
        <name>S-adenosyl-L-methionine</name>
        <dbReference type="ChEBI" id="CHEBI:59789"/>
    </ligand>
</feature>
<feature type="binding site" evidence="3">
    <location>
        <begin position="678"/>
        <end position="680"/>
    </location>
    <ligand>
        <name>S-adenosyl-L-methionine</name>
        <dbReference type="ChEBI" id="CHEBI:59789"/>
    </ligand>
</feature>
<feature type="site" description="Essential for RNA triphosphatase activity" evidence="2">
    <location>
        <position position="77"/>
    </location>
</feature>
<feature type="site" description="Essential for RNA triphosphatase activity" evidence="2">
    <location>
        <position position="107"/>
    </location>
</feature>
<feature type="site" description="Essential for RNA triphosphatase activity" evidence="2">
    <location>
        <position position="126"/>
    </location>
</feature>
<feature type="site" description="Essential for RNA triphosphatase activity" evidence="2">
    <location>
        <position position="159"/>
    </location>
</feature>
<feature type="site" description="Essential for RNA triphosphatase activity" evidence="2">
    <location>
        <position position="161"/>
    </location>
</feature>
<feature type="site" description="mRNA cap binding" evidence="3">
    <location>
        <position position="607"/>
    </location>
</feature>
<feature type="site" description="mRNA cap binding" evidence="3">
    <location>
        <position position="632"/>
    </location>
</feature>
<feature type="site" description="mRNA cap binding" evidence="3">
    <location>
        <position position="682"/>
    </location>
</feature>
<feature type="site" description="mRNA cap binding" evidence="3">
    <location>
        <position position="763"/>
    </location>
</feature>
<feature type="site" description="mRNA cap binding" evidence="3">
    <location>
        <position position="836"/>
    </location>
</feature>
<sequence length="844" mass="96761">MDANIVSSSTIATYIDALAKNASELEQRSTAYEINNELELVFIKPPLITLTNVVNISTIQESFIRFTVTNKEGVKIRTKIPLSKVHGLDVKNVQLVDAIDNIVWEKKSLVTENRLHKECLLRLSTEERHIFLDYKKYGSSIRLELVNLIQAKTKNFTIDFKLKYFLGSGAQSKSSLLHAINHPKSRPNTSLEIEFTPRDNEKVPYDELIKELTTLSRHIFMASPENVILSPPINAPIKTFMLPKQDIVGLDLENLYAVTKTDGIPITIRVTSKGLYCYFTHLGYIIRYPVKRIIDSEVVVFGEAVKDKNWTVYLIKLIEPVNAINDRLEESKYVESKLVDICDRIVFKSKKYEGPFTTTSEVVDMLSTYLPKQPEGVILFYSKGPKSNIDFKIKKENTIDQTANVVFRYMSSEPIIFGESSIFVEYKKFSNDKGFPKEYGSGKIVLYNGVNYLNNIYCLEYINTHNEVGIKSVVVPIKFIAEFLVNGEILKPRIDKTMKYINSEDYYGNQHNIIVEHLRDQSIKIGDIFNEDKLSDVGHQYANNDKFRLNPEVSYFTNKRTRGPLGILSNYVKTLLISMYCSKTFLDDSNKRKVLAIDFGNGADLEKYFYGEIALLVATDPDADAIARGNERYNKLNSGIKTKYYKFDYIQETIRSDTFVSSVREVFYFGKFNIIDWQFAIHYSFHPRHYATVMNNLSELTASGGKVLITTMDGDKLSKLTDKKTFIIHKNLPSSENYMSVEKIADDRIVVYNPSTMSTPMTEYIIKKNDIVRVFNEYGFVLVDNVDFATIIERSKKFINGASTMEDRPSTKNFFELNRGAIKCEGLDVEDLLSYYVVYVFSKR</sequence>
<dbReference type="EC" id="3.6.1.74"/>
<dbReference type="EC" id="2.7.7.50"/>
<dbReference type="EC" id="2.1.1.56"/>
<dbReference type="EMBL" id="U94848">
    <property type="protein sequence ID" value="AAB96511.1"/>
    <property type="molecule type" value="Genomic_DNA"/>
</dbReference>
<dbReference type="EMBL" id="AY603355">
    <property type="protein sequence ID" value="AAT10496.1"/>
    <property type="molecule type" value="Genomic_DNA"/>
</dbReference>
<dbReference type="PIR" id="T37374">
    <property type="entry name" value="T37374"/>
</dbReference>
<dbReference type="SMR" id="O57209"/>
<dbReference type="IntAct" id="O57209">
    <property type="interactions" value="1"/>
</dbReference>
<dbReference type="MINT" id="O57209"/>
<dbReference type="Proteomes" id="UP000159908">
    <property type="component" value="Segment"/>
</dbReference>
<dbReference type="Proteomes" id="UP000172909">
    <property type="component" value="Segment"/>
</dbReference>
<dbReference type="GO" id="GO:0044423">
    <property type="term" value="C:virion component"/>
    <property type="evidence" value="ECO:0007669"/>
    <property type="project" value="UniProtKB-KW"/>
</dbReference>
<dbReference type="GO" id="GO:0005525">
    <property type="term" value="F:GTP binding"/>
    <property type="evidence" value="ECO:0007669"/>
    <property type="project" value="UniProtKB-KW"/>
</dbReference>
<dbReference type="GO" id="GO:0050355">
    <property type="term" value="F:inorganic triphosphate phosphatase activity"/>
    <property type="evidence" value="ECO:0007669"/>
    <property type="project" value="InterPro"/>
</dbReference>
<dbReference type="GO" id="GO:0046872">
    <property type="term" value="F:metal ion binding"/>
    <property type="evidence" value="ECO:0007669"/>
    <property type="project" value="UniProtKB-KW"/>
</dbReference>
<dbReference type="GO" id="GO:0004482">
    <property type="term" value="F:mRNA 5'-cap (guanine-N7-)-methyltransferase activity"/>
    <property type="evidence" value="ECO:0007669"/>
    <property type="project" value="UniProtKB-EC"/>
</dbReference>
<dbReference type="GO" id="GO:0140818">
    <property type="term" value="F:mRNA 5'-triphosphate monophosphatase activity"/>
    <property type="evidence" value="ECO:0007669"/>
    <property type="project" value="RHEA"/>
</dbReference>
<dbReference type="GO" id="GO:0004484">
    <property type="term" value="F:mRNA guanylyltransferase activity"/>
    <property type="evidence" value="ECO:0007669"/>
    <property type="project" value="UniProtKB-EC"/>
</dbReference>
<dbReference type="GO" id="GO:0004651">
    <property type="term" value="F:polynucleotide 5'-phosphatase activity"/>
    <property type="evidence" value="ECO:0007669"/>
    <property type="project" value="UniProtKB-EC"/>
</dbReference>
<dbReference type="GO" id="GO:0003723">
    <property type="term" value="F:RNA binding"/>
    <property type="evidence" value="ECO:0007669"/>
    <property type="project" value="UniProtKB-KW"/>
</dbReference>
<dbReference type="FunFam" id="3.30.470.140:FF:000001">
    <property type="entry name" value="mRNA-capping enzyme catalytic subunit"/>
    <property type="match status" value="1"/>
</dbReference>
<dbReference type="FunFam" id="3.40.50.150:FF:000307">
    <property type="entry name" value="mRNA-capping enzyme catalytic subunit"/>
    <property type="match status" value="1"/>
</dbReference>
<dbReference type="Gene3D" id="2.40.50.830">
    <property type="match status" value="1"/>
</dbReference>
<dbReference type="Gene3D" id="3.20.100.20">
    <property type="match status" value="1"/>
</dbReference>
<dbReference type="Gene3D" id="3.30.470.140">
    <property type="match status" value="1"/>
</dbReference>
<dbReference type="Gene3D" id="3.40.50.150">
    <property type="entry name" value="Vaccinia Virus protein VP39"/>
    <property type="match status" value="1"/>
</dbReference>
<dbReference type="InterPro" id="IPR048425">
    <property type="entry name" value="MCEL_GT_NTPase"/>
</dbReference>
<dbReference type="InterPro" id="IPR048426">
    <property type="entry name" value="MCEL_GT_OB"/>
</dbReference>
<dbReference type="InterPro" id="IPR046429">
    <property type="entry name" value="MCEL_NTPase_sf"/>
</dbReference>
<dbReference type="InterPro" id="IPR046428">
    <property type="entry name" value="MCEL_OB_dom_sf"/>
</dbReference>
<dbReference type="InterPro" id="IPR019602">
    <property type="entry name" value="MCEL_TPase"/>
</dbReference>
<dbReference type="InterPro" id="IPR046430">
    <property type="entry name" value="MCEL_TPase_sf"/>
</dbReference>
<dbReference type="InterPro" id="IPR004971">
    <property type="entry name" value="mRNA_G-N7_MeTrfase_dom"/>
</dbReference>
<dbReference type="InterPro" id="IPR039753">
    <property type="entry name" value="RG7MT1"/>
</dbReference>
<dbReference type="InterPro" id="IPR029063">
    <property type="entry name" value="SAM-dependent_MTases_sf"/>
</dbReference>
<dbReference type="PANTHER" id="PTHR12189:SF2">
    <property type="entry name" value="MRNA CAP GUANINE-N7 METHYLTRANSFERASE"/>
    <property type="match status" value="1"/>
</dbReference>
<dbReference type="PANTHER" id="PTHR12189">
    <property type="entry name" value="MRNA GUANINE-7- METHYLTRANSFERASE"/>
    <property type="match status" value="1"/>
</dbReference>
<dbReference type="Pfam" id="PF21004">
    <property type="entry name" value="MCEL_GT_NTPase"/>
    <property type="match status" value="1"/>
</dbReference>
<dbReference type="Pfam" id="PF21005">
    <property type="entry name" value="MCEL_GT_OB"/>
    <property type="match status" value="1"/>
</dbReference>
<dbReference type="Pfam" id="PF10640">
    <property type="entry name" value="MCEL_TPase"/>
    <property type="match status" value="1"/>
</dbReference>
<dbReference type="Pfam" id="PF03291">
    <property type="entry name" value="mRNA_G-N7_MeTrfase"/>
    <property type="match status" value="1"/>
</dbReference>
<dbReference type="SUPFAM" id="SSF53335">
    <property type="entry name" value="S-adenosyl-L-methionine-dependent methyltransferases"/>
    <property type="match status" value="1"/>
</dbReference>
<dbReference type="PROSITE" id="PS51562">
    <property type="entry name" value="RNA_CAP0_MT"/>
    <property type="match status" value="1"/>
</dbReference>
<protein>
    <recommendedName>
        <fullName>mRNA-capping enzyme catalytic subunit</fullName>
    </recommendedName>
    <alternativeName>
        <fullName>Virus termination factor large subunit</fullName>
        <shortName>VTF large subunit</shortName>
    </alternativeName>
    <alternativeName>
        <fullName>mRNA-capping enzyme 97 kDa subunit</fullName>
    </alternativeName>
    <alternativeName>
        <fullName>mRNA-capping enzyme D1 subunit</fullName>
    </alternativeName>
    <alternativeName>
        <fullName>mRNA-capping enzyme large subunit</fullName>
    </alternativeName>
    <domain>
        <recommendedName>
            <fullName>Polynucleotide 5'-triphosphatase</fullName>
            <ecNumber>3.6.1.74</ecNumber>
        </recommendedName>
        <alternativeName>
            <fullName>mRNA 5'-triphosphatase</fullName>
            <shortName>TPase</shortName>
        </alternativeName>
    </domain>
    <domain>
        <recommendedName>
            <fullName>mRNA guanylyltransferase</fullName>
            <ecNumber>2.7.7.50</ecNumber>
        </recommendedName>
        <alternativeName>
            <fullName>GTP--RNA guanylyltransferase</fullName>
            <shortName>GTase</shortName>
        </alternativeName>
    </domain>
    <domain>
        <recommendedName>
            <fullName>mRNA (guanine-N(7))-methyltransferase</fullName>
            <ecNumber>2.1.1.56</ecNumber>
        </recommendedName>
        <alternativeName>
            <fullName>mRNA cap methyltransferase</fullName>
        </alternativeName>
    </domain>
</protein>
<keyword id="KW-0342">GTP-binding</keyword>
<keyword id="KW-0378">Hydrolase</keyword>
<keyword id="KW-0460">Magnesium</keyword>
<keyword id="KW-0479">Metal-binding</keyword>
<keyword id="KW-0489">Methyltransferase</keyword>
<keyword id="KW-0506">mRNA capping</keyword>
<keyword id="KW-0507">mRNA processing</keyword>
<keyword id="KW-0511">Multifunctional enzyme</keyword>
<keyword id="KW-0547">Nucleotide-binding</keyword>
<keyword id="KW-0548">Nucleotidyltransferase</keyword>
<keyword id="KW-0694">RNA-binding</keyword>
<keyword id="KW-0949">S-adenosyl-L-methionine</keyword>
<keyword id="KW-0808">Transferase</keyword>
<keyword id="KW-0946">Virion</keyword>
<name>MCEL_VACCA</name>
<reference key="1">
    <citation type="journal article" date="1998" name="Virology">
        <title>The complete genomic sequence of the modified vaccinia Ankara strain: comparison with other orthopoxviruses.</title>
        <authorList>
            <person name="Antoine G."/>
            <person name="Scheiflinger F."/>
            <person name="Dorner F."/>
            <person name="Falkner F.G."/>
        </authorList>
    </citation>
    <scope>NUCLEOTIDE SEQUENCE [LARGE SCALE GENOMIC DNA]</scope>
</reference>
<reference key="2">
    <citation type="submission" date="2004-04" db="EMBL/GenBank/DDBJ databases">
        <authorList>
            <person name="Esposito J.J."/>
            <person name="Frace M."/>
            <person name="Sammons S.A."/>
            <person name="Olsen-Rasmussen M.S."/>
            <person name="Osborne J."/>
            <person name="Khristova M."/>
            <person name="Wohlhueter R.M."/>
        </authorList>
    </citation>
    <scope>NUCLEOTIDE SEQUENCE [LARGE SCALE GENOMIC DNA]</scope>
    <source>
        <strain>Isolate Acambis 3000</strain>
    </source>
</reference>
<organismHost>
    <name type="scientific">Homo sapiens</name>
    <name type="common">Human</name>
    <dbReference type="NCBI Taxonomy" id="9606"/>
</organismHost>
<organism>
    <name type="scientific">Vaccinia virus (strain Ankara)</name>
    <name type="common">VACV</name>
    <dbReference type="NCBI Taxonomy" id="126794"/>
    <lineage>
        <taxon>Viruses</taxon>
        <taxon>Varidnaviria</taxon>
        <taxon>Bamfordvirae</taxon>
        <taxon>Nucleocytoviricota</taxon>
        <taxon>Pokkesviricetes</taxon>
        <taxon>Chitovirales</taxon>
        <taxon>Poxviridae</taxon>
        <taxon>Chordopoxvirinae</taxon>
        <taxon>Orthopoxvirus</taxon>
        <taxon>Vaccinia virus</taxon>
    </lineage>
</organism>
<comment type="function">
    <text evidence="2">Catalytic subunit of the mRNA capping enzyme which catalyzes three enzymatic reactions: the 5' triphosphate end of the pre-mRNA is hydrolyzed to a diphosphate by RNA 5' triphosphatase; the diphosphate RNA end is capped with GMP by RNA guanylyltransferase and the GpppN cap is methylated by RNA (guanine-N7) methyltransferase. Heterodimeric mRNA capping enzyme catalyzes the linkage of a N7-methyl-guanosine moiety to the first transcribed nucleotide (cap 0 structure), whereas the methyltransferase OPG102 is responsible for a second methylation at the 2'-O position of the ribose (cap 1 structure). Also involved in early viral gene transcription termination and intermediate viral gene transcription initiation. Early gene transcription termination requires the termination factor VTF, the DNA-dependent ATPase NPH-I/OPG123 and the RAP94/OPG109 subunit of the viral RNA polymerase, as well as the presence of a specific termination motif. Binds, together with RAP94/OPG109, to the termination motif 5'-UUUUUNU-3' in the nascent early mRNA.</text>
</comment>
<comment type="catalytic activity">
    <reaction evidence="2">
        <text>a 5'-end triphospho-ribonucleoside in mRNA + H2O = a 5'-end diphospho-ribonucleoside in mRNA + phosphate + H(+)</text>
        <dbReference type="Rhea" id="RHEA:67004"/>
        <dbReference type="Rhea" id="RHEA-COMP:17164"/>
        <dbReference type="Rhea" id="RHEA-COMP:17165"/>
        <dbReference type="ChEBI" id="CHEBI:15377"/>
        <dbReference type="ChEBI" id="CHEBI:15378"/>
        <dbReference type="ChEBI" id="CHEBI:43474"/>
        <dbReference type="ChEBI" id="CHEBI:167616"/>
        <dbReference type="ChEBI" id="CHEBI:167618"/>
        <dbReference type="EC" id="3.6.1.74"/>
    </reaction>
    <physiologicalReaction direction="left-to-right" evidence="2">
        <dbReference type="Rhea" id="RHEA:67005"/>
    </physiologicalReaction>
</comment>
<comment type="catalytic activity">
    <reaction evidence="2">
        <text>a 5'-end diphospho-ribonucleoside in mRNA + GTP + H(+) = a 5'-end (5'-triphosphoguanosine)-ribonucleoside in mRNA + diphosphate</text>
        <dbReference type="Rhea" id="RHEA:67012"/>
        <dbReference type="Rhea" id="RHEA-COMP:17165"/>
        <dbReference type="Rhea" id="RHEA-COMP:17166"/>
        <dbReference type="ChEBI" id="CHEBI:15378"/>
        <dbReference type="ChEBI" id="CHEBI:33019"/>
        <dbReference type="ChEBI" id="CHEBI:37565"/>
        <dbReference type="ChEBI" id="CHEBI:167616"/>
        <dbReference type="ChEBI" id="CHEBI:167617"/>
        <dbReference type="EC" id="2.7.7.50"/>
    </reaction>
</comment>
<comment type="catalytic activity">
    <reaction evidence="2">
        <text>a 5'-end (5'-triphosphoguanosine)-ribonucleoside in mRNA + S-adenosyl-L-methionine = a 5'-end (N(7)-methyl 5'-triphosphoguanosine)-ribonucleoside in mRNA + S-adenosyl-L-homocysteine</text>
        <dbReference type="Rhea" id="RHEA:67008"/>
        <dbReference type="Rhea" id="RHEA-COMP:17166"/>
        <dbReference type="Rhea" id="RHEA-COMP:17167"/>
        <dbReference type="ChEBI" id="CHEBI:57856"/>
        <dbReference type="ChEBI" id="CHEBI:59789"/>
        <dbReference type="ChEBI" id="CHEBI:156461"/>
        <dbReference type="ChEBI" id="CHEBI:167617"/>
        <dbReference type="EC" id="2.1.1.56"/>
    </reaction>
</comment>
<comment type="cofactor">
    <cofactor evidence="2">
        <name>Mg(2+)</name>
        <dbReference type="ChEBI" id="CHEBI:18420"/>
    </cofactor>
</comment>
<comment type="subunit">
    <text evidence="2">Forms a heterodimer with the regulatory subunit OPG124.</text>
</comment>
<comment type="subcellular location">
    <subcellularLocation>
        <location evidence="2">Virion</location>
    </subcellularLocation>
    <text evidence="2">All the enzymes and other proteins required to synthesize early mRNAs are packaged within the virion core along with the DNA genome.</text>
</comment>
<comment type="domain">
    <text evidence="2">The N-terminus contains the triphosphatase and guanylyltransferase domains, whereas the C-terminus contains the methyltransferase domain. The N-terminus is involved in binding to the termination motif 5'-UUUUUNU-3' in the nascent mRNA.</text>
</comment>
<comment type="similarity">
    <text evidence="4">In the N-terminal section; belongs to the dsDNA virus mRNA guanylyltransferase family.</text>
</comment>
<comment type="similarity">
    <text evidence="3">In the C-terminal section; belongs to the class I-like SAM-binding methyltransferase superfamily. mRNA cap 0 methyltransferase family.</text>
</comment>